<dbReference type="EC" id="5.1.3.9" evidence="1"/>
<dbReference type="EMBL" id="AB055649">
    <property type="protein sequence ID" value="BAB64878.1"/>
    <property type="molecule type" value="Genomic_DNA"/>
</dbReference>
<dbReference type="EMBL" id="AB071359">
    <property type="protein sequence ID" value="BAB85961.1"/>
    <property type="molecule type" value="Genomic_DNA"/>
</dbReference>
<dbReference type="EMBL" id="AB071365">
    <property type="protein sequence ID" value="BAB85973.1"/>
    <property type="molecule type" value="Genomic_DNA"/>
</dbReference>
<dbReference type="EMBL" id="AJ416308">
    <property type="protein sequence ID" value="CAC94856.1"/>
    <property type="molecule type" value="Genomic_DNA"/>
</dbReference>
<dbReference type="RefSeq" id="WP_009910312.1">
    <property type="nucleotide sequence ID" value="NZ_WCIZ01000025.1"/>
</dbReference>
<dbReference type="RefSeq" id="WP_012027343.1">
    <property type="nucleotide sequence ID" value="NZ_WODB01000004.1"/>
</dbReference>
<dbReference type="SMR" id="P0CB52"/>
<dbReference type="STRING" id="1321372.GCA_000478745_00836"/>
<dbReference type="OrthoDB" id="9781704at2"/>
<dbReference type="UniPathway" id="UPA00629">
    <property type="reaction ID" value="UER00682"/>
</dbReference>
<dbReference type="GO" id="GO:0005829">
    <property type="term" value="C:cytosol"/>
    <property type="evidence" value="ECO:0007669"/>
    <property type="project" value="TreeGrafter"/>
</dbReference>
<dbReference type="GO" id="GO:0047465">
    <property type="term" value="F:N-acylglucosamine-6-phosphate 2-epimerase activity"/>
    <property type="evidence" value="ECO:0007669"/>
    <property type="project" value="UniProtKB-EC"/>
</dbReference>
<dbReference type="GO" id="GO:0005975">
    <property type="term" value="P:carbohydrate metabolic process"/>
    <property type="evidence" value="ECO:0007669"/>
    <property type="project" value="UniProtKB-UniRule"/>
</dbReference>
<dbReference type="GO" id="GO:0006053">
    <property type="term" value="P:N-acetylmannosamine catabolic process"/>
    <property type="evidence" value="ECO:0007669"/>
    <property type="project" value="TreeGrafter"/>
</dbReference>
<dbReference type="GO" id="GO:0019262">
    <property type="term" value="P:N-acetylneuraminate catabolic process"/>
    <property type="evidence" value="ECO:0007669"/>
    <property type="project" value="UniProtKB-UniRule"/>
</dbReference>
<dbReference type="CDD" id="cd04729">
    <property type="entry name" value="NanE"/>
    <property type="match status" value="1"/>
</dbReference>
<dbReference type="FunFam" id="3.20.20.70:FF:000035">
    <property type="entry name" value="Putative N-acetylmannosamine-6-phosphate 2-epimerase"/>
    <property type="match status" value="1"/>
</dbReference>
<dbReference type="Gene3D" id="3.20.20.70">
    <property type="entry name" value="Aldolase class I"/>
    <property type="match status" value="1"/>
</dbReference>
<dbReference type="HAMAP" id="MF_01235">
    <property type="entry name" value="ManNAc6P_epimer"/>
    <property type="match status" value="1"/>
</dbReference>
<dbReference type="InterPro" id="IPR013785">
    <property type="entry name" value="Aldolase_TIM"/>
</dbReference>
<dbReference type="InterPro" id="IPR007260">
    <property type="entry name" value="NanE"/>
</dbReference>
<dbReference type="InterPro" id="IPR011060">
    <property type="entry name" value="RibuloseP-bd_barrel"/>
</dbReference>
<dbReference type="NCBIfam" id="NF002231">
    <property type="entry name" value="PRK01130.1"/>
    <property type="match status" value="1"/>
</dbReference>
<dbReference type="PANTHER" id="PTHR36204">
    <property type="entry name" value="N-ACETYLMANNOSAMINE-6-PHOSPHATE 2-EPIMERASE-RELATED"/>
    <property type="match status" value="1"/>
</dbReference>
<dbReference type="PANTHER" id="PTHR36204:SF1">
    <property type="entry name" value="N-ACETYLMANNOSAMINE-6-PHOSPHATE 2-EPIMERASE-RELATED"/>
    <property type="match status" value="1"/>
</dbReference>
<dbReference type="Pfam" id="PF04131">
    <property type="entry name" value="NanE"/>
    <property type="match status" value="1"/>
</dbReference>
<dbReference type="SUPFAM" id="SSF51366">
    <property type="entry name" value="Ribulose-phoshate binding barrel"/>
    <property type="match status" value="1"/>
</dbReference>
<gene>
    <name evidence="1" type="primary">nanE</name>
</gene>
<keyword id="KW-0119">Carbohydrate metabolism</keyword>
<keyword id="KW-0413">Isomerase</keyword>
<sequence>MGKISKEALKEQIKDGIIISCQALPGEPLYREEGGIMPLLVKAAQEAGAVGIRANSVRDIKEIKEVTTLPIIGIIKRDYPPQEPFITATMREVDELAALDIEVIALDCTKRERYDGLDIVDFINQIKEKYPEQLFMADISTFEEGLTAYEAGIDFIGTTLSGYTSYSRQEEGPDIELVDRLCRAGIDVIAEGKIHYPDQVKIIHDLGVAGIVVGGAITRPKEIAERFISALHK</sequence>
<protein>
    <recommendedName>
        <fullName evidence="1">Putative N-acetylmannosamine-6-phosphate 2-epimerase</fullName>
        <ecNumber evidence="1">5.1.3.9</ecNumber>
    </recommendedName>
    <alternativeName>
        <fullName evidence="1">ManNAc-6-P epimerase</fullName>
    </alternativeName>
</protein>
<organism>
    <name type="scientific">Streptococcus suis</name>
    <dbReference type="NCBI Taxonomy" id="1307"/>
    <lineage>
        <taxon>Bacteria</taxon>
        <taxon>Bacillati</taxon>
        <taxon>Bacillota</taxon>
        <taxon>Bacilli</taxon>
        <taxon>Lactobacillales</taxon>
        <taxon>Streptococcaceae</taxon>
        <taxon>Streptococcus</taxon>
    </lineage>
</organism>
<reference key="1">
    <citation type="journal article" date="2001" name="Plasmid">
        <title>Thermosensitive suicide vectors for gene replacement in Streptococcus suis.</title>
        <authorList>
            <person name="Takamatsu D."/>
            <person name="Osaki M."/>
            <person name="Sekizaki T."/>
        </authorList>
    </citation>
    <scope>NUCLEOTIDE SEQUENCE [GENOMIC DNA]</scope>
    <source>
        <strain>DAT2</strain>
    </source>
</reference>
<reference key="2">
    <citation type="journal article" date="2002" name="J. Bacteriol.">
        <title>Evidence for lateral transfer of the suilysin gene region of Streptococcus suis.</title>
        <authorList>
            <person name="Takamatsu D."/>
            <person name="Osaki M."/>
            <person name="Sekizaki T."/>
        </authorList>
    </citation>
    <scope>NUCLEOTIDE SEQUENCE [GENOMIC DNA]</scope>
    <source>
        <strain>10581 / Serotype 13</strain>
        <strain>DAT1 / Serotype 2</strain>
    </source>
</reference>
<reference key="3">
    <citation type="journal article" date="2001" name="Infect. Immun.">
        <title>Distribution and genetic diversity of suilysin in Streptococcus suis isolated from different diseases of pigs and characterization of the genetic basis of suilysin absence.</title>
        <authorList>
            <person name="King S.J."/>
            <person name="Heath O.J."/>
            <person name="Luque I."/>
            <person name="Tarradas C."/>
            <person name="Dowson C."/>
            <person name="Whatmore A.M."/>
        </authorList>
    </citation>
    <scope>NUCLEOTIDE SEQUENCE [GENOMIC DNA] OF 1-145</scope>
    <source>
        <strain>DH5</strain>
    </source>
</reference>
<proteinExistence type="inferred from homology"/>
<comment type="function">
    <text evidence="1">Converts N-acetylmannosamine-6-phosphate (ManNAc-6-P) to N-acetylglucosamine-6-phosphate (GlcNAc-6-P).</text>
</comment>
<comment type="catalytic activity">
    <reaction evidence="1">
        <text>an N-acyl-D-glucosamine 6-phosphate = an N-acyl-D-mannosamine 6-phosphate</text>
        <dbReference type="Rhea" id="RHEA:23932"/>
        <dbReference type="ChEBI" id="CHEBI:57599"/>
        <dbReference type="ChEBI" id="CHEBI:57666"/>
        <dbReference type="EC" id="5.1.3.9"/>
    </reaction>
</comment>
<comment type="pathway">
    <text evidence="1">Amino-sugar metabolism; N-acetylneuraminate degradation; D-fructose 6-phosphate from N-acetylneuraminate: step 3/5.</text>
</comment>
<comment type="similarity">
    <text evidence="1">Belongs to the NanE family.</text>
</comment>
<feature type="chain" id="PRO_0000179813" description="Putative N-acetylmannosamine-6-phosphate 2-epimerase">
    <location>
        <begin position="1"/>
        <end position="233"/>
    </location>
</feature>
<feature type="sequence variant" description="In strain: DAT2.">
    <original>K</original>
    <variation>T</variation>
    <location>
        <position position="3"/>
    </location>
</feature>
<feature type="sequence variant" description="In strain: DAT2.">
    <original>EA</original>
    <variation>TD</variation>
    <location>
        <begin position="7"/>
        <end position="8"/>
    </location>
</feature>
<feature type="sequence variant" description="In strain: 10581.">
    <original>A</original>
    <variation>V</variation>
    <location>
        <position position="8"/>
    </location>
</feature>
<feature type="sequence variant" description="In strain: DAT2.">
    <original>E</original>
    <variation>Q</variation>
    <location>
        <position position="11"/>
    </location>
</feature>
<feature type="sequence variant" description="In strain: DAT2.">
    <original>I</original>
    <variation>V</variation>
    <location>
        <position position="19"/>
    </location>
</feature>
<feature type="sequence variant" description="In strain: DAT2 and 10581.">
    <original>N</original>
    <variation>K</variation>
    <location>
        <position position="124"/>
    </location>
</feature>
<feature type="sequence variant" description="In strain: 10581.">
    <original>D</original>
    <variation>N</variation>
    <location>
        <position position="205"/>
    </location>
</feature>
<name>NANE_STRSU</name>
<accession>P0CB52</accession>
<accession>Q8RR39</accession>
<accession>Q8RR48</accession>
<accession>Q8VVF7</accession>
<accession>Q8VVG0</accession>
<accession>Q93HW6</accession>
<evidence type="ECO:0000255" key="1">
    <source>
        <dbReference type="HAMAP-Rule" id="MF_01235"/>
    </source>
</evidence>